<organism>
    <name type="scientific">Shewanella oneidensis (strain ATCC 700550 / JCM 31522 / CIP 106686 / LMG 19005 / NCIMB 14063 / MR-1)</name>
    <dbReference type="NCBI Taxonomy" id="211586"/>
    <lineage>
        <taxon>Bacteria</taxon>
        <taxon>Pseudomonadati</taxon>
        <taxon>Pseudomonadota</taxon>
        <taxon>Gammaproteobacteria</taxon>
        <taxon>Alteromonadales</taxon>
        <taxon>Shewanellaceae</taxon>
        <taxon>Shewanella</taxon>
    </lineage>
</organism>
<reference key="1">
    <citation type="journal article" date="2002" name="Nat. Biotechnol.">
        <title>Genome sequence of the dissimilatory metal ion-reducing bacterium Shewanella oneidensis.</title>
        <authorList>
            <person name="Heidelberg J.F."/>
            <person name="Paulsen I.T."/>
            <person name="Nelson K.E."/>
            <person name="Gaidos E.J."/>
            <person name="Nelson W.C."/>
            <person name="Read T.D."/>
            <person name="Eisen J.A."/>
            <person name="Seshadri R."/>
            <person name="Ward N.L."/>
            <person name="Methe B.A."/>
            <person name="Clayton R.A."/>
            <person name="Meyer T."/>
            <person name="Tsapin A."/>
            <person name="Scott J."/>
            <person name="Beanan M.J."/>
            <person name="Brinkac L.M."/>
            <person name="Daugherty S.C."/>
            <person name="DeBoy R.T."/>
            <person name="Dodson R.J."/>
            <person name="Durkin A.S."/>
            <person name="Haft D.H."/>
            <person name="Kolonay J.F."/>
            <person name="Madupu R."/>
            <person name="Peterson J.D."/>
            <person name="Umayam L.A."/>
            <person name="White O."/>
            <person name="Wolf A.M."/>
            <person name="Vamathevan J.J."/>
            <person name="Weidman J.F."/>
            <person name="Impraim M."/>
            <person name="Lee K."/>
            <person name="Berry K.J."/>
            <person name="Lee C."/>
            <person name="Mueller J."/>
            <person name="Khouri H.M."/>
            <person name="Gill J."/>
            <person name="Utterback T.R."/>
            <person name="McDonald L.A."/>
            <person name="Feldblyum T.V."/>
            <person name="Smith H.O."/>
            <person name="Venter J.C."/>
            <person name="Nealson K.H."/>
            <person name="Fraser C.M."/>
        </authorList>
    </citation>
    <scope>NUCLEOTIDE SEQUENCE [LARGE SCALE GENOMIC DNA]</scope>
    <source>
        <strain>ATCC 700550 / JCM 31522 / CIP 106686 / LMG 19005 / NCIMB 14063 / MR-1</strain>
    </source>
</reference>
<accession>Q8EGG4</accession>
<sequence length="154" mass="17445">MSNQMNTMDITEILKYLPHRYPFLLIDRVLDFTPGESLHAIKNVTINEPFFQGHFPIQPVMPGVLILEAMAQATGLLAFKTMSDDVPPPGVLYYFAGIDNARFRRVVEPGDQIHFEVKMIKERRGIGVFYGEAKVDGEVVCSAEIMCARREINQ</sequence>
<protein>
    <recommendedName>
        <fullName evidence="1">3-hydroxyacyl-[acyl-carrier-protein] dehydratase FabZ</fullName>
        <ecNumber evidence="1">4.2.1.59</ecNumber>
    </recommendedName>
    <alternativeName>
        <fullName evidence="1">(3R)-hydroxymyristoyl-[acyl-carrier-protein] dehydratase</fullName>
        <shortName evidence="1">(3R)-hydroxymyristoyl-ACP dehydrase</shortName>
    </alternativeName>
    <alternativeName>
        <fullName evidence="1">Beta-hydroxyacyl-ACP dehydratase</fullName>
    </alternativeName>
</protein>
<name>FABZ_SHEON</name>
<comment type="function">
    <text evidence="1">Involved in unsaturated fatty acids biosynthesis. Catalyzes the dehydration of short chain beta-hydroxyacyl-ACPs and long chain saturated and unsaturated beta-hydroxyacyl-ACPs.</text>
</comment>
<comment type="catalytic activity">
    <reaction evidence="1">
        <text>a (3R)-hydroxyacyl-[ACP] = a (2E)-enoyl-[ACP] + H2O</text>
        <dbReference type="Rhea" id="RHEA:13097"/>
        <dbReference type="Rhea" id="RHEA-COMP:9925"/>
        <dbReference type="Rhea" id="RHEA-COMP:9945"/>
        <dbReference type="ChEBI" id="CHEBI:15377"/>
        <dbReference type="ChEBI" id="CHEBI:78784"/>
        <dbReference type="ChEBI" id="CHEBI:78827"/>
        <dbReference type="EC" id="4.2.1.59"/>
    </reaction>
</comment>
<comment type="subcellular location">
    <subcellularLocation>
        <location evidence="1">Cytoplasm</location>
    </subcellularLocation>
</comment>
<comment type="similarity">
    <text evidence="1">Belongs to the thioester dehydratase family. FabZ subfamily.</text>
</comment>
<proteinExistence type="inferred from homology"/>
<dbReference type="EC" id="4.2.1.59" evidence="1"/>
<dbReference type="EMBL" id="AE014299">
    <property type="protein sequence ID" value="AAN54695.1"/>
    <property type="molecule type" value="Genomic_DNA"/>
</dbReference>
<dbReference type="RefSeq" id="NP_717251.1">
    <property type="nucleotide sequence ID" value="NC_004347.2"/>
</dbReference>
<dbReference type="RefSeq" id="WP_011071795.1">
    <property type="nucleotide sequence ID" value="NZ_CP053946.1"/>
</dbReference>
<dbReference type="SMR" id="Q8EGG4"/>
<dbReference type="STRING" id="211586.SO_1640"/>
<dbReference type="PaxDb" id="211586-SO_1640"/>
<dbReference type="KEGG" id="son:SO_1640"/>
<dbReference type="PATRIC" id="fig|211586.12.peg.1579"/>
<dbReference type="eggNOG" id="COG0764">
    <property type="taxonomic scope" value="Bacteria"/>
</dbReference>
<dbReference type="HOGENOM" id="CLU_078912_1_0_6"/>
<dbReference type="OrthoDB" id="9772788at2"/>
<dbReference type="PhylomeDB" id="Q8EGG4"/>
<dbReference type="BioCyc" id="SONE211586:G1GMP-1510-MONOMER"/>
<dbReference type="Proteomes" id="UP000008186">
    <property type="component" value="Chromosome"/>
</dbReference>
<dbReference type="GO" id="GO:0005737">
    <property type="term" value="C:cytoplasm"/>
    <property type="evidence" value="ECO:0007669"/>
    <property type="project" value="UniProtKB-SubCell"/>
</dbReference>
<dbReference type="GO" id="GO:0016020">
    <property type="term" value="C:membrane"/>
    <property type="evidence" value="ECO:0007669"/>
    <property type="project" value="GOC"/>
</dbReference>
<dbReference type="GO" id="GO:0019171">
    <property type="term" value="F:(3R)-hydroxyacyl-[acyl-carrier-protein] dehydratase activity"/>
    <property type="evidence" value="ECO:0007669"/>
    <property type="project" value="UniProtKB-EC"/>
</dbReference>
<dbReference type="GO" id="GO:0006633">
    <property type="term" value="P:fatty acid biosynthetic process"/>
    <property type="evidence" value="ECO:0007669"/>
    <property type="project" value="UniProtKB-UniRule"/>
</dbReference>
<dbReference type="GO" id="GO:0009245">
    <property type="term" value="P:lipid A biosynthetic process"/>
    <property type="evidence" value="ECO:0007669"/>
    <property type="project" value="UniProtKB-UniRule"/>
</dbReference>
<dbReference type="CDD" id="cd01288">
    <property type="entry name" value="FabZ"/>
    <property type="match status" value="1"/>
</dbReference>
<dbReference type="FunFam" id="3.10.129.10:FF:000001">
    <property type="entry name" value="3-hydroxyacyl-[acyl-carrier-protein] dehydratase FabZ"/>
    <property type="match status" value="1"/>
</dbReference>
<dbReference type="Gene3D" id="3.10.129.10">
    <property type="entry name" value="Hotdog Thioesterase"/>
    <property type="match status" value="1"/>
</dbReference>
<dbReference type="HAMAP" id="MF_00406">
    <property type="entry name" value="FabZ"/>
    <property type="match status" value="1"/>
</dbReference>
<dbReference type="InterPro" id="IPR013114">
    <property type="entry name" value="FabA_FabZ"/>
</dbReference>
<dbReference type="InterPro" id="IPR010084">
    <property type="entry name" value="FabZ"/>
</dbReference>
<dbReference type="InterPro" id="IPR029069">
    <property type="entry name" value="HotDog_dom_sf"/>
</dbReference>
<dbReference type="NCBIfam" id="TIGR01750">
    <property type="entry name" value="fabZ"/>
    <property type="match status" value="1"/>
</dbReference>
<dbReference type="NCBIfam" id="NF000582">
    <property type="entry name" value="PRK00006.1"/>
    <property type="match status" value="1"/>
</dbReference>
<dbReference type="PANTHER" id="PTHR30272">
    <property type="entry name" value="3-HYDROXYACYL-[ACYL-CARRIER-PROTEIN] DEHYDRATASE"/>
    <property type="match status" value="1"/>
</dbReference>
<dbReference type="PANTHER" id="PTHR30272:SF1">
    <property type="entry name" value="3-HYDROXYACYL-[ACYL-CARRIER-PROTEIN] DEHYDRATASE"/>
    <property type="match status" value="1"/>
</dbReference>
<dbReference type="Pfam" id="PF07977">
    <property type="entry name" value="FabA"/>
    <property type="match status" value="1"/>
</dbReference>
<dbReference type="SUPFAM" id="SSF54637">
    <property type="entry name" value="Thioesterase/thiol ester dehydrase-isomerase"/>
    <property type="match status" value="1"/>
</dbReference>
<gene>
    <name evidence="1" type="primary">fabZ</name>
    <name type="ordered locus">SO_1640</name>
</gene>
<feature type="chain" id="PRO_0000091727" description="3-hydroxyacyl-[acyl-carrier-protein] dehydratase FabZ">
    <location>
        <begin position="1"/>
        <end position="154"/>
    </location>
</feature>
<feature type="active site" evidence="1">
    <location>
        <position position="54"/>
    </location>
</feature>
<evidence type="ECO:0000255" key="1">
    <source>
        <dbReference type="HAMAP-Rule" id="MF_00406"/>
    </source>
</evidence>
<keyword id="KW-0963">Cytoplasm</keyword>
<keyword id="KW-0441">Lipid A biosynthesis</keyword>
<keyword id="KW-0444">Lipid biosynthesis</keyword>
<keyword id="KW-0443">Lipid metabolism</keyword>
<keyword id="KW-0456">Lyase</keyword>
<keyword id="KW-1185">Reference proteome</keyword>